<feature type="chain" id="PRO_1000135623" description="Small ribosomal subunit protein uS7">
    <location>
        <begin position="1"/>
        <end position="156"/>
    </location>
</feature>
<keyword id="KW-1185">Reference proteome</keyword>
<keyword id="KW-0687">Ribonucleoprotein</keyword>
<keyword id="KW-0689">Ribosomal protein</keyword>
<keyword id="KW-0694">RNA-binding</keyword>
<keyword id="KW-0699">rRNA-binding</keyword>
<keyword id="KW-0820">tRNA-binding</keyword>
<organism>
    <name type="scientific">Staphylococcus carnosus (strain TM300)</name>
    <dbReference type="NCBI Taxonomy" id="396513"/>
    <lineage>
        <taxon>Bacteria</taxon>
        <taxon>Bacillati</taxon>
        <taxon>Bacillota</taxon>
        <taxon>Bacilli</taxon>
        <taxon>Bacillales</taxon>
        <taxon>Staphylococcaceae</taxon>
        <taxon>Staphylococcus</taxon>
    </lineage>
</organism>
<comment type="function">
    <text evidence="1">One of the primary rRNA binding proteins, it binds directly to 16S rRNA where it nucleates assembly of the head domain of the 30S subunit. Is located at the subunit interface close to the decoding center, probably blocks exit of the E-site tRNA.</text>
</comment>
<comment type="subunit">
    <text evidence="1">Part of the 30S ribosomal subunit. Contacts proteins S9 and S11.</text>
</comment>
<comment type="similarity">
    <text evidence="1">Belongs to the universal ribosomal protein uS7 family.</text>
</comment>
<name>RS7_STACT</name>
<accession>B9DKV6</accession>
<reference key="1">
    <citation type="journal article" date="2009" name="Appl. Environ. Microbiol.">
        <title>Genome analysis of the meat starter culture bacterium Staphylococcus carnosus TM300.</title>
        <authorList>
            <person name="Rosenstein R."/>
            <person name="Nerz C."/>
            <person name="Biswas L."/>
            <person name="Resch A."/>
            <person name="Raddatz G."/>
            <person name="Schuster S.C."/>
            <person name="Goetz F."/>
        </authorList>
    </citation>
    <scope>NUCLEOTIDE SEQUENCE [LARGE SCALE GENOMIC DNA]</scope>
    <source>
        <strain>TM300</strain>
    </source>
</reference>
<protein>
    <recommendedName>
        <fullName evidence="1">Small ribosomal subunit protein uS7</fullName>
    </recommendedName>
    <alternativeName>
        <fullName evidence="2">30S ribosomal protein S7</fullName>
    </alternativeName>
</protein>
<proteinExistence type="inferred from homology"/>
<sequence>MPRKGSVPKRDVLPDPIHNSKLVTKLINKIMLDGKRGTAQRILYSAFDIVQERSGRDAIEVFEEAINNIMPVLEVKARRVGGSNYQVPVEVRPERRTTLGLRWLVNYSRLRGEKTMEERLANEILDAANNTGGAVKKREDTHKMAEANKAFAHYRW</sequence>
<evidence type="ECO:0000255" key="1">
    <source>
        <dbReference type="HAMAP-Rule" id="MF_00480"/>
    </source>
</evidence>
<evidence type="ECO:0000305" key="2"/>
<dbReference type="EMBL" id="AM295250">
    <property type="protein sequence ID" value="CAL27118.1"/>
    <property type="molecule type" value="Genomic_DNA"/>
</dbReference>
<dbReference type="RefSeq" id="WP_012664233.1">
    <property type="nucleotide sequence ID" value="NC_012121.1"/>
</dbReference>
<dbReference type="SMR" id="B9DKV6"/>
<dbReference type="GeneID" id="93795134"/>
<dbReference type="KEGG" id="sca:SCA_0205"/>
<dbReference type="eggNOG" id="COG0049">
    <property type="taxonomic scope" value="Bacteria"/>
</dbReference>
<dbReference type="HOGENOM" id="CLU_072226_1_1_9"/>
<dbReference type="OrthoDB" id="9807653at2"/>
<dbReference type="BioCyc" id="SCAR396513:SCA_RS01050-MONOMER"/>
<dbReference type="Proteomes" id="UP000000444">
    <property type="component" value="Chromosome"/>
</dbReference>
<dbReference type="GO" id="GO:0015935">
    <property type="term" value="C:small ribosomal subunit"/>
    <property type="evidence" value="ECO:0007669"/>
    <property type="project" value="InterPro"/>
</dbReference>
<dbReference type="GO" id="GO:0019843">
    <property type="term" value="F:rRNA binding"/>
    <property type="evidence" value="ECO:0007669"/>
    <property type="project" value="UniProtKB-UniRule"/>
</dbReference>
<dbReference type="GO" id="GO:0003735">
    <property type="term" value="F:structural constituent of ribosome"/>
    <property type="evidence" value="ECO:0007669"/>
    <property type="project" value="InterPro"/>
</dbReference>
<dbReference type="GO" id="GO:0000049">
    <property type="term" value="F:tRNA binding"/>
    <property type="evidence" value="ECO:0007669"/>
    <property type="project" value="UniProtKB-UniRule"/>
</dbReference>
<dbReference type="GO" id="GO:0006412">
    <property type="term" value="P:translation"/>
    <property type="evidence" value="ECO:0007669"/>
    <property type="project" value="UniProtKB-UniRule"/>
</dbReference>
<dbReference type="CDD" id="cd14869">
    <property type="entry name" value="uS7_Bacteria"/>
    <property type="match status" value="1"/>
</dbReference>
<dbReference type="FunFam" id="1.10.455.10:FF:000001">
    <property type="entry name" value="30S ribosomal protein S7"/>
    <property type="match status" value="1"/>
</dbReference>
<dbReference type="Gene3D" id="1.10.455.10">
    <property type="entry name" value="Ribosomal protein S7 domain"/>
    <property type="match status" value="1"/>
</dbReference>
<dbReference type="HAMAP" id="MF_00480_B">
    <property type="entry name" value="Ribosomal_uS7_B"/>
    <property type="match status" value="1"/>
</dbReference>
<dbReference type="InterPro" id="IPR000235">
    <property type="entry name" value="Ribosomal_uS7"/>
</dbReference>
<dbReference type="InterPro" id="IPR005717">
    <property type="entry name" value="Ribosomal_uS7_bac/org-type"/>
</dbReference>
<dbReference type="InterPro" id="IPR020606">
    <property type="entry name" value="Ribosomal_uS7_CS"/>
</dbReference>
<dbReference type="InterPro" id="IPR023798">
    <property type="entry name" value="Ribosomal_uS7_dom"/>
</dbReference>
<dbReference type="InterPro" id="IPR036823">
    <property type="entry name" value="Ribosomal_uS7_dom_sf"/>
</dbReference>
<dbReference type="NCBIfam" id="TIGR01029">
    <property type="entry name" value="rpsG_bact"/>
    <property type="match status" value="1"/>
</dbReference>
<dbReference type="PANTHER" id="PTHR11205">
    <property type="entry name" value="RIBOSOMAL PROTEIN S7"/>
    <property type="match status" value="1"/>
</dbReference>
<dbReference type="Pfam" id="PF00177">
    <property type="entry name" value="Ribosomal_S7"/>
    <property type="match status" value="1"/>
</dbReference>
<dbReference type="PIRSF" id="PIRSF002122">
    <property type="entry name" value="RPS7p_RPS7a_RPS5e_RPS7o"/>
    <property type="match status" value="1"/>
</dbReference>
<dbReference type="SUPFAM" id="SSF47973">
    <property type="entry name" value="Ribosomal protein S7"/>
    <property type="match status" value="1"/>
</dbReference>
<dbReference type="PROSITE" id="PS00052">
    <property type="entry name" value="RIBOSOMAL_S7"/>
    <property type="match status" value="1"/>
</dbReference>
<gene>
    <name evidence="1" type="primary">rpsG</name>
    <name type="ordered locus">Sca_0205</name>
</gene>